<feature type="chain" id="PRO_1000048853" description="tRNA modification GTPase MnmE">
    <location>
        <begin position="1"/>
        <end position="455"/>
    </location>
</feature>
<feature type="domain" description="TrmE-type G">
    <location>
        <begin position="216"/>
        <end position="378"/>
    </location>
</feature>
<feature type="binding site" evidence="1">
    <location>
        <position position="24"/>
    </location>
    <ligand>
        <name>(6S)-5-formyl-5,6,7,8-tetrahydrofolate</name>
        <dbReference type="ChEBI" id="CHEBI:57457"/>
    </ligand>
</feature>
<feature type="binding site" evidence="1">
    <location>
        <position position="81"/>
    </location>
    <ligand>
        <name>(6S)-5-formyl-5,6,7,8-tetrahydrofolate</name>
        <dbReference type="ChEBI" id="CHEBI:57457"/>
    </ligand>
</feature>
<feature type="binding site" evidence="1">
    <location>
        <position position="120"/>
    </location>
    <ligand>
        <name>(6S)-5-formyl-5,6,7,8-tetrahydrofolate</name>
        <dbReference type="ChEBI" id="CHEBI:57457"/>
    </ligand>
</feature>
<feature type="binding site" evidence="1">
    <location>
        <begin position="226"/>
        <end position="231"/>
    </location>
    <ligand>
        <name>GTP</name>
        <dbReference type="ChEBI" id="CHEBI:37565"/>
    </ligand>
</feature>
<feature type="binding site" evidence="1">
    <location>
        <position position="226"/>
    </location>
    <ligand>
        <name>K(+)</name>
        <dbReference type="ChEBI" id="CHEBI:29103"/>
    </ligand>
</feature>
<feature type="binding site" evidence="1">
    <location>
        <position position="230"/>
    </location>
    <ligand>
        <name>Mg(2+)</name>
        <dbReference type="ChEBI" id="CHEBI:18420"/>
    </ligand>
</feature>
<feature type="binding site" evidence="1">
    <location>
        <begin position="245"/>
        <end position="251"/>
    </location>
    <ligand>
        <name>GTP</name>
        <dbReference type="ChEBI" id="CHEBI:37565"/>
    </ligand>
</feature>
<feature type="binding site" evidence="1">
    <location>
        <position position="245"/>
    </location>
    <ligand>
        <name>K(+)</name>
        <dbReference type="ChEBI" id="CHEBI:29103"/>
    </ligand>
</feature>
<feature type="binding site" evidence="1">
    <location>
        <position position="247"/>
    </location>
    <ligand>
        <name>K(+)</name>
        <dbReference type="ChEBI" id="CHEBI:29103"/>
    </ligand>
</feature>
<feature type="binding site" evidence="1">
    <location>
        <position position="250"/>
    </location>
    <ligand>
        <name>K(+)</name>
        <dbReference type="ChEBI" id="CHEBI:29103"/>
    </ligand>
</feature>
<feature type="binding site" evidence="1">
    <location>
        <position position="251"/>
    </location>
    <ligand>
        <name>Mg(2+)</name>
        <dbReference type="ChEBI" id="CHEBI:18420"/>
    </ligand>
</feature>
<feature type="binding site" evidence="1">
    <location>
        <begin position="270"/>
        <end position="273"/>
    </location>
    <ligand>
        <name>GTP</name>
        <dbReference type="ChEBI" id="CHEBI:37565"/>
    </ligand>
</feature>
<feature type="binding site" evidence="1">
    <location>
        <begin position="335"/>
        <end position="338"/>
    </location>
    <ligand>
        <name>GTP</name>
        <dbReference type="ChEBI" id="CHEBI:37565"/>
    </ligand>
</feature>
<feature type="binding site" evidence="1">
    <location>
        <begin position="359"/>
        <end position="361"/>
    </location>
    <ligand>
        <name>GTP</name>
        <dbReference type="ChEBI" id="CHEBI:37565"/>
    </ligand>
</feature>
<feature type="binding site" evidence="1">
    <location>
        <position position="455"/>
    </location>
    <ligand>
        <name>(6S)-5-formyl-5,6,7,8-tetrahydrofolate</name>
        <dbReference type="ChEBI" id="CHEBI:57457"/>
    </ligand>
</feature>
<protein>
    <recommendedName>
        <fullName evidence="1">tRNA modification GTPase MnmE</fullName>
        <ecNumber evidence="1">3.6.-.-</ecNumber>
    </recommendedName>
</protein>
<dbReference type="EC" id="3.6.-.-" evidence="1"/>
<dbReference type="EMBL" id="CP000744">
    <property type="protein sequence ID" value="ABR85775.1"/>
    <property type="molecule type" value="Genomic_DNA"/>
</dbReference>
<dbReference type="RefSeq" id="WP_003151621.1">
    <property type="nucleotide sequence ID" value="NC_009656.1"/>
</dbReference>
<dbReference type="SMR" id="A6VF44"/>
<dbReference type="KEGG" id="pap:PSPA7_6368"/>
<dbReference type="HOGENOM" id="CLU_019624_4_1_6"/>
<dbReference type="Proteomes" id="UP000001582">
    <property type="component" value="Chromosome"/>
</dbReference>
<dbReference type="GO" id="GO:0005829">
    <property type="term" value="C:cytosol"/>
    <property type="evidence" value="ECO:0007669"/>
    <property type="project" value="TreeGrafter"/>
</dbReference>
<dbReference type="GO" id="GO:0005525">
    <property type="term" value="F:GTP binding"/>
    <property type="evidence" value="ECO:0007669"/>
    <property type="project" value="UniProtKB-UniRule"/>
</dbReference>
<dbReference type="GO" id="GO:0003924">
    <property type="term" value="F:GTPase activity"/>
    <property type="evidence" value="ECO:0007669"/>
    <property type="project" value="UniProtKB-UniRule"/>
</dbReference>
<dbReference type="GO" id="GO:0046872">
    <property type="term" value="F:metal ion binding"/>
    <property type="evidence" value="ECO:0007669"/>
    <property type="project" value="UniProtKB-KW"/>
</dbReference>
<dbReference type="GO" id="GO:0030488">
    <property type="term" value="P:tRNA methylation"/>
    <property type="evidence" value="ECO:0007669"/>
    <property type="project" value="TreeGrafter"/>
</dbReference>
<dbReference type="GO" id="GO:0002098">
    <property type="term" value="P:tRNA wobble uridine modification"/>
    <property type="evidence" value="ECO:0007669"/>
    <property type="project" value="TreeGrafter"/>
</dbReference>
<dbReference type="CDD" id="cd04164">
    <property type="entry name" value="trmE"/>
    <property type="match status" value="1"/>
</dbReference>
<dbReference type="CDD" id="cd14858">
    <property type="entry name" value="TrmE_N"/>
    <property type="match status" value="1"/>
</dbReference>
<dbReference type="FunFam" id="3.30.1360.120:FF:000001">
    <property type="entry name" value="tRNA modification GTPase MnmE"/>
    <property type="match status" value="1"/>
</dbReference>
<dbReference type="FunFam" id="3.40.50.300:FF:000249">
    <property type="entry name" value="tRNA modification GTPase MnmE"/>
    <property type="match status" value="1"/>
</dbReference>
<dbReference type="Gene3D" id="3.40.50.300">
    <property type="entry name" value="P-loop containing nucleotide triphosphate hydrolases"/>
    <property type="match status" value="1"/>
</dbReference>
<dbReference type="Gene3D" id="3.30.1360.120">
    <property type="entry name" value="Probable tRNA modification gtpase trme, domain 1"/>
    <property type="match status" value="1"/>
</dbReference>
<dbReference type="Gene3D" id="1.20.120.430">
    <property type="entry name" value="tRNA modification GTPase MnmE domain 2"/>
    <property type="match status" value="1"/>
</dbReference>
<dbReference type="HAMAP" id="MF_00379">
    <property type="entry name" value="GTPase_MnmE"/>
    <property type="match status" value="1"/>
</dbReference>
<dbReference type="InterPro" id="IPR031168">
    <property type="entry name" value="G_TrmE"/>
</dbReference>
<dbReference type="InterPro" id="IPR006073">
    <property type="entry name" value="GTP-bd"/>
</dbReference>
<dbReference type="InterPro" id="IPR018948">
    <property type="entry name" value="GTP-bd_TrmE_N"/>
</dbReference>
<dbReference type="InterPro" id="IPR004520">
    <property type="entry name" value="GTPase_MnmE"/>
</dbReference>
<dbReference type="InterPro" id="IPR027368">
    <property type="entry name" value="MnmE_dom2"/>
</dbReference>
<dbReference type="InterPro" id="IPR025867">
    <property type="entry name" value="MnmE_helical"/>
</dbReference>
<dbReference type="InterPro" id="IPR027417">
    <property type="entry name" value="P-loop_NTPase"/>
</dbReference>
<dbReference type="InterPro" id="IPR005225">
    <property type="entry name" value="Small_GTP-bd"/>
</dbReference>
<dbReference type="InterPro" id="IPR027266">
    <property type="entry name" value="TrmE/GcvT_dom1"/>
</dbReference>
<dbReference type="NCBIfam" id="TIGR00450">
    <property type="entry name" value="mnmE_trmE_thdF"/>
    <property type="match status" value="1"/>
</dbReference>
<dbReference type="NCBIfam" id="NF003661">
    <property type="entry name" value="PRK05291.1-3"/>
    <property type="match status" value="1"/>
</dbReference>
<dbReference type="NCBIfam" id="TIGR00231">
    <property type="entry name" value="small_GTP"/>
    <property type="match status" value="1"/>
</dbReference>
<dbReference type="PANTHER" id="PTHR42714">
    <property type="entry name" value="TRNA MODIFICATION GTPASE GTPBP3"/>
    <property type="match status" value="1"/>
</dbReference>
<dbReference type="PANTHER" id="PTHR42714:SF2">
    <property type="entry name" value="TRNA MODIFICATION GTPASE GTPBP3, MITOCHONDRIAL"/>
    <property type="match status" value="1"/>
</dbReference>
<dbReference type="Pfam" id="PF01926">
    <property type="entry name" value="MMR_HSR1"/>
    <property type="match status" value="1"/>
</dbReference>
<dbReference type="Pfam" id="PF12631">
    <property type="entry name" value="MnmE_helical"/>
    <property type="match status" value="1"/>
</dbReference>
<dbReference type="Pfam" id="PF10396">
    <property type="entry name" value="TrmE_N"/>
    <property type="match status" value="1"/>
</dbReference>
<dbReference type="PRINTS" id="PR00326">
    <property type="entry name" value="GTP1OBG"/>
</dbReference>
<dbReference type="SUPFAM" id="SSF52540">
    <property type="entry name" value="P-loop containing nucleoside triphosphate hydrolases"/>
    <property type="match status" value="1"/>
</dbReference>
<dbReference type="SUPFAM" id="SSF116878">
    <property type="entry name" value="TrmE connector domain"/>
    <property type="match status" value="1"/>
</dbReference>
<dbReference type="PROSITE" id="PS51709">
    <property type="entry name" value="G_TRME"/>
    <property type="match status" value="1"/>
</dbReference>
<gene>
    <name evidence="1" type="primary">mnmE</name>
    <name evidence="1" type="synonym">trmE</name>
    <name type="ordered locus">PSPA7_6368</name>
</gene>
<comment type="function">
    <text evidence="1">Exhibits a very high intrinsic GTPase hydrolysis rate. Involved in the addition of a carboxymethylaminomethyl (cmnm) group at the wobble position (U34) of certain tRNAs, forming tRNA-cmnm(5)s(2)U34.</text>
</comment>
<comment type="cofactor">
    <cofactor evidence="1">
        <name>K(+)</name>
        <dbReference type="ChEBI" id="CHEBI:29103"/>
    </cofactor>
    <text evidence="1">Binds 1 potassium ion per subunit.</text>
</comment>
<comment type="subunit">
    <text evidence="1">Homodimer. Heterotetramer of two MnmE and two MnmG subunits.</text>
</comment>
<comment type="subcellular location">
    <subcellularLocation>
        <location evidence="1">Cytoplasm</location>
    </subcellularLocation>
</comment>
<comment type="similarity">
    <text evidence="1">Belongs to the TRAFAC class TrmE-Era-EngA-EngB-Septin-like GTPase superfamily. TrmE GTPase family.</text>
</comment>
<proteinExistence type="inferred from homology"/>
<sequence>MQAATETIAAIATAPGRGGVGIVRVSGPLAGRIAVEVSGRELKPRHAHYGPFLDGGGQVIDEGLSLYFPGPNSFTGEDVLELQGHGGPVVLDLLVQRCLELGARQARPGEFSERAFLNDKLDLAQAEAIADLIEASSEQAARNALRSLQGEFSRRVHALTEQLISLRIYVEAAIDFPEEEIDFLADGHVLGLLEKVRTELSTVRREASQGALLRDGMTVVIAGRPNAGKSSLLNALAGREAAIVTDIAGTTRDVLREHIHIDGMPLHVVDTAGLRDTEDHVEKIGVERALKAIGEADRVLLVVDATAPEAADPFSLWPEFLDQRPEPGKVTLIRNKADLSTEAIGLEESADGHVTITLSARTNAGLELLREHLKACMGFEQTAESGFSARRRHLEALRLAGNALEHGHAQLIHNGAGELLAEDLRQAQQHLGEITGAFTPDDLLGRIFSSFCIGK</sequence>
<reference key="1">
    <citation type="submission" date="2007-06" db="EMBL/GenBank/DDBJ databases">
        <authorList>
            <person name="Dodson R.J."/>
            <person name="Harkins D."/>
            <person name="Paulsen I.T."/>
        </authorList>
    </citation>
    <scope>NUCLEOTIDE SEQUENCE [LARGE SCALE GENOMIC DNA]</scope>
    <source>
        <strain>DSM 24068 / PA7</strain>
    </source>
</reference>
<evidence type="ECO:0000255" key="1">
    <source>
        <dbReference type="HAMAP-Rule" id="MF_00379"/>
    </source>
</evidence>
<organism>
    <name type="scientific">Pseudomonas paraeruginosa (strain DSM 24068 / PA7)</name>
    <name type="common">Pseudomonas aeruginosa (strain PA7)</name>
    <dbReference type="NCBI Taxonomy" id="381754"/>
    <lineage>
        <taxon>Bacteria</taxon>
        <taxon>Pseudomonadati</taxon>
        <taxon>Pseudomonadota</taxon>
        <taxon>Gammaproteobacteria</taxon>
        <taxon>Pseudomonadales</taxon>
        <taxon>Pseudomonadaceae</taxon>
        <taxon>Pseudomonas</taxon>
        <taxon>Pseudomonas paraeruginosa</taxon>
    </lineage>
</organism>
<accession>A6VF44</accession>
<keyword id="KW-0963">Cytoplasm</keyword>
<keyword id="KW-0342">GTP-binding</keyword>
<keyword id="KW-0378">Hydrolase</keyword>
<keyword id="KW-0460">Magnesium</keyword>
<keyword id="KW-0479">Metal-binding</keyword>
<keyword id="KW-0547">Nucleotide-binding</keyword>
<keyword id="KW-0630">Potassium</keyword>
<keyword id="KW-0819">tRNA processing</keyword>
<name>MNME_PSEP7</name>